<organism>
    <name type="scientific">Sus scrofa</name>
    <name type="common">Pig</name>
    <dbReference type="NCBI Taxonomy" id="9823"/>
    <lineage>
        <taxon>Eukaryota</taxon>
        <taxon>Metazoa</taxon>
        <taxon>Chordata</taxon>
        <taxon>Craniata</taxon>
        <taxon>Vertebrata</taxon>
        <taxon>Euteleostomi</taxon>
        <taxon>Mammalia</taxon>
        <taxon>Eutheria</taxon>
        <taxon>Laurasiatheria</taxon>
        <taxon>Artiodactyla</taxon>
        <taxon>Suina</taxon>
        <taxon>Suidae</taxon>
        <taxon>Sus</taxon>
    </lineage>
</organism>
<name>KCNH2_PIG</name>
<reference key="1">
    <citation type="submission" date="2018-07" db="EMBL/GenBank/DDBJ databases">
        <authorList>
            <consortium name="Porcine genome sequencing project"/>
        </authorList>
    </citation>
    <scope>NUCLEOTIDE SEQUENCE [LARGE SCALE GENOMIC DNA]</scope>
</reference>
<reference key="2">
    <citation type="submission" date="1999-07" db="EMBL/GenBank/DDBJ databases">
        <title>Porcine eag-related gene (erg).</title>
        <authorList>
            <person name="Ohya S."/>
            <person name="Imaizumi Y."/>
        </authorList>
    </citation>
    <scope>NUCLEOTIDE SEQUENCE [MRNA] OF 432-528</scope>
    <source>
        <tissue>Heart</tissue>
    </source>
</reference>
<keyword id="KW-1003">Cell membrane</keyword>
<keyword id="KW-0175">Coiled coil</keyword>
<keyword id="KW-0407">Ion channel</keyword>
<keyword id="KW-0406">Ion transport</keyword>
<keyword id="KW-0472">Membrane</keyword>
<keyword id="KW-0488">Methylation</keyword>
<keyword id="KW-0597">Phosphoprotein</keyword>
<keyword id="KW-0630">Potassium</keyword>
<keyword id="KW-0631">Potassium channel</keyword>
<keyword id="KW-0633">Potassium transport</keyword>
<keyword id="KW-1185">Reference proteome</keyword>
<keyword id="KW-0812">Transmembrane</keyword>
<keyword id="KW-1133">Transmembrane helix</keyword>
<keyword id="KW-0813">Transport</keyword>
<keyword id="KW-0851">Voltage-gated channel</keyword>
<feature type="chain" id="PRO_0000054001" description="Voltage-gated inwardly rectifying potassium channel KCNH2">
    <location>
        <begin position="1"/>
        <end position="1154"/>
    </location>
</feature>
<feature type="topological domain" description="Cytoplasmic" evidence="10">
    <location>
        <begin position="1"/>
        <end position="403"/>
    </location>
</feature>
<feature type="transmembrane region" description="Helical; Name=Segment S1" evidence="5">
    <location>
        <begin position="404"/>
        <end position="424"/>
    </location>
</feature>
<feature type="topological domain" description="Extracellular" evidence="10">
    <location>
        <begin position="425"/>
        <end position="450"/>
    </location>
</feature>
<feature type="transmembrane region" description="Helical; Name=Segment S2" evidence="5">
    <location>
        <begin position="451"/>
        <end position="471"/>
    </location>
</feature>
<feature type="topological domain" description="Cytoplasmic" evidence="10">
    <location>
        <begin position="472"/>
        <end position="495"/>
    </location>
</feature>
<feature type="transmembrane region" description="Helical; Name=Segment S3" evidence="5">
    <location>
        <begin position="496"/>
        <end position="516"/>
    </location>
</feature>
<feature type="topological domain" description="Extracellular" evidence="10">
    <location>
        <begin position="517"/>
        <end position="520"/>
    </location>
</feature>
<feature type="transmembrane region" description="Helical; Voltage-sensor; Name=Segment S4" evidence="5">
    <location>
        <begin position="521"/>
        <end position="541"/>
    </location>
</feature>
<feature type="topological domain" description="Cytoplasmic" evidence="10">
    <location>
        <begin position="542"/>
        <end position="547"/>
    </location>
</feature>
<feature type="transmembrane region" description="Helical; Name=Segment S5" evidence="5">
    <location>
        <begin position="548"/>
        <end position="568"/>
    </location>
</feature>
<feature type="topological domain" description="Extracellular" evidence="10">
    <location>
        <begin position="569"/>
        <end position="611"/>
    </location>
</feature>
<feature type="intramembrane region" description="Pore-forming; Name=Segment H5" evidence="5">
    <location>
        <begin position="612"/>
        <end position="632"/>
    </location>
</feature>
<feature type="topological domain" description="Extracellular" evidence="10">
    <location>
        <begin position="633"/>
        <end position="638"/>
    </location>
</feature>
<feature type="transmembrane region" description="Helical; Name=Segment S6" evidence="5">
    <location>
        <begin position="639"/>
        <end position="659"/>
    </location>
</feature>
<feature type="topological domain" description="Cytoplasmic" evidence="10">
    <location>
        <begin position="660"/>
        <end position="1154"/>
    </location>
</feature>
<feature type="domain" description="PAS" evidence="7">
    <location>
        <begin position="41"/>
        <end position="70"/>
    </location>
</feature>
<feature type="domain" description="PAC" evidence="8">
    <location>
        <begin position="92"/>
        <end position="144"/>
    </location>
</feature>
<feature type="region of interest" description="Disordered" evidence="9">
    <location>
        <begin position="233"/>
        <end position="312"/>
    </location>
</feature>
<feature type="region of interest" description="cNMP-binding domain" evidence="6">
    <location>
        <begin position="742"/>
        <end position="842"/>
    </location>
</feature>
<feature type="region of interest" description="Disordered" evidence="9">
    <location>
        <begin position="870"/>
        <end position="985"/>
    </location>
</feature>
<feature type="region of interest" description="Disordered" evidence="9">
    <location>
        <begin position="1125"/>
        <end position="1154"/>
    </location>
</feature>
<feature type="coiled-coil region" evidence="5">
    <location>
        <begin position="1037"/>
        <end position="1064"/>
    </location>
</feature>
<feature type="short sequence motif" description="Selectivity filter" evidence="4">
    <location>
        <begin position="624"/>
        <end position="629"/>
    </location>
</feature>
<feature type="compositionally biased region" description="Polar residues" evidence="9">
    <location>
        <begin position="258"/>
        <end position="269"/>
    </location>
</feature>
<feature type="compositionally biased region" description="Basic residues" evidence="9">
    <location>
        <begin position="883"/>
        <end position="892"/>
    </location>
</feature>
<feature type="compositionally biased region" description="Gly residues" evidence="9">
    <location>
        <begin position="916"/>
        <end position="927"/>
    </location>
</feature>
<feature type="compositionally biased region" description="Low complexity" evidence="9">
    <location>
        <begin position="928"/>
        <end position="939"/>
    </location>
</feature>
<feature type="modified residue" description="Phosphoserine" evidence="3">
    <location>
        <position position="239"/>
    </location>
</feature>
<feature type="modified residue" description="Phosphoserine" evidence="2">
    <location>
        <position position="283"/>
    </location>
</feature>
<feature type="modified residue" description="Phosphoserine" evidence="2">
    <location>
        <position position="284"/>
    </location>
</feature>
<feature type="modified residue" description="Phosphoserine" evidence="3">
    <location>
        <position position="320"/>
    </location>
</feature>
<feature type="modified residue" description="Phosphoserine" evidence="1">
    <location>
        <position position="351"/>
    </location>
</feature>
<feature type="modified residue" description="Phosphoserine" evidence="3">
    <location>
        <position position="871"/>
    </location>
</feature>
<feature type="modified residue" description="Phosphoserine" evidence="2">
    <location>
        <position position="874"/>
    </location>
</feature>
<feature type="modified residue" description="Omega-N-methylarginine" evidence="2">
    <location>
        <position position="1014"/>
    </location>
</feature>
<feature type="modified residue" description="Phosphoserine" evidence="3">
    <location>
        <position position="1132"/>
    </location>
</feature>
<dbReference type="EMBL" id="DQIR01223216">
    <property type="protein sequence ID" value="HDB78693.1"/>
    <property type="molecule type" value="Transcribed_RNA"/>
</dbReference>
<dbReference type="EMBL" id="AB030030">
    <property type="protein sequence ID" value="BAA85106.1"/>
    <property type="molecule type" value="mRNA"/>
</dbReference>
<dbReference type="RefSeq" id="XP_003134632.3">
    <property type="nucleotide sequence ID" value="XM_003134584.4"/>
</dbReference>
<dbReference type="RefSeq" id="XP_020934420.1">
    <property type="nucleotide sequence ID" value="XM_021078761.1"/>
</dbReference>
<dbReference type="SMR" id="Q9TUI4"/>
<dbReference type="STRING" id="9823.ENSSSCP00000038711"/>
<dbReference type="PaxDb" id="9823-ENSSSCP00000029250"/>
<dbReference type="Ensembl" id="ENSSSCT00000036607.2">
    <property type="protein sequence ID" value="ENSSSCP00000029250.2"/>
    <property type="gene ID" value="ENSSSCG00000016448.6"/>
</dbReference>
<dbReference type="Ensembl" id="ENSSSCT00085006042">
    <property type="protein sequence ID" value="ENSSSCP00085004459"/>
    <property type="gene ID" value="ENSSSCG00085003269"/>
</dbReference>
<dbReference type="Ensembl" id="ENSSSCT00105021739">
    <property type="protein sequence ID" value="ENSSSCP00105015751"/>
    <property type="gene ID" value="ENSSSCG00105010867"/>
</dbReference>
<dbReference type="Ensembl" id="ENSSSCT00110073856">
    <property type="protein sequence ID" value="ENSSSCP00110052167"/>
    <property type="gene ID" value="ENSSSCG00110038686"/>
</dbReference>
<dbReference type="GeneID" id="100523293"/>
<dbReference type="VGNC" id="VGNC:89343">
    <property type="gene designation" value="KCNH2"/>
</dbReference>
<dbReference type="eggNOG" id="KOG0498">
    <property type="taxonomic scope" value="Eukaryota"/>
</dbReference>
<dbReference type="GeneTree" id="ENSGT00940000159846"/>
<dbReference type="InParanoid" id="Q9TUI4"/>
<dbReference type="OMA" id="CHNRHAS"/>
<dbReference type="TreeFam" id="TF313130"/>
<dbReference type="Reactome" id="R-SSC-1296072">
    <property type="pathway name" value="Voltage gated Potassium channels"/>
</dbReference>
<dbReference type="Reactome" id="R-SSC-5576890">
    <property type="pathway name" value="Phase 3 - rapid repolarisation"/>
</dbReference>
<dbReference type="Proteomes" id="UP000008227">
    <property type="component" value="Chromosome 18"/>
</dbReference>
<dbReference type="Proteomes" id="UP000314985">
    <property type="component" value="Unplaced"/>
</dbReference>
<dbReference type="Proteomes" id="UP000694570">
    <property type="component" value="Unplaced"/>
</dbReference>
<dbReference type="Proteomes" id="UP000694571">
    <property type="component" value="Unplaced"/>
</dbReference>
<dbReference type="Proteomes" id="UP000694720">
    <property type="component" value="Unplaced"/>
</dbReference>
<dbReference type="Proteomes" id="UP000694722">
    <property type="component" value="Unplaced"/>
</dbReference>
<dbReference type="Proteomes" id="UP000694723">
    <property type="component" value="Unplaced"/>
</dbReference>
<dbReference type="Proteomes" id="UP000694724">
    <property type="component" value="Unplaced"/>
</dbReference>
<dbReference type="Proteomes" id="UP000694725">
    <property type="component" value="Unplaced"/>
</dbReference>
<dbReference type="Proteomes" id="UP000694726">
    <property type="component" value="Unplaced"/>
</dbReference>
<dbReference type="Proteomes" id="UP000694727">
    <property type="component" value="Unplaced"/>
</dbReference>
<dbReference type="Proteomes" id="UP000694728">
    <property type="component" value="Unplaced"/>
</dbReference>
<dbReference type="Bgee" id="ENSSSCG00000016448">
    <property type="expression patterns" value="Expressed in granulosa cell and 34 other cell types or tissues"/>
</dbReference>
<dbReference type="GO" id="GO:0009986">
    <property type="term" value="C:cell surface"/>
    <property type="evidence" value="ECO:0007669"/>
    <property type="project" value="Ensembl"/>
</dbReference>
<dbReference type="GO" id="GO:1902937">
    <property type="term" value="C:inward rectifier potassium channel complex"/>
    <property type="evidence" value="ECO:0007669"/>
    <property type="project" value="Ensembl"/>
</dbReference>
<dbReference type="GO" id="GO:0048471">
    <property type="term" value="C:perinuclear region of cytoplasm"/>
    <property type="evidence" value="ECO:0007669"/>
    <property type="project" value="Ensembl"/>
</dbReference>
<dbReference type="GO" id="GO:0005251">
    <property type="term" value="F:delayed rectifier potassium channel activity"/>
    <property type="evidence" value="ECO:0007669"/>
    <property type="project" value="Ensembl"/>
</dbReference>
<dbReference type="GO" id="GO:0005242">
    <property type="term" value="F:inward rectifier potassium channel activity"/>
    <property type="evidence" value="ECO:0007669"/>
    <property type="project" value="Ensembl"/>
</dbReference>
<dbReference type="GO" id="GO:0042803">
    <property type="term" value="F:protein homodimerization activity"/>
    <property type="evidence" value="ECO:0007669"/>
    <property type="project" value="Ensembl"/>
</dbReference>
<dbReference type="GO" id="GO:0097110">
    <property type="term" value="F:scaffold protein binding"/>
    <property type="evidence" value="ECO:0007669"/>
    <property type="project" value="Ensembl"/>
</dbReference>
<dbReference type="GO" id="GO:0000976">
    <property type="term" value="F:transcription cis-regulatory region binding"/>
    <property type="evidence" value="ECO:0007669"/>
    <property type="project" value="Ensembl"/>
</dbReference>
<dbReference type="GO" id="GO:0031625">
    <property type="term" value="F:ubiquitin protein ligase binding"/>
    <property type="evidence" value="ECO:0007669"/>
    <property type="project" value="Ensembl"/>
</dbReference>
<dbReference type="GO" id="GO:0005249">
    <property type="term" value="F:voltage-gated potassium channel activity"/>
    <property type="evidence" value="ECO:0000250"/>
    <property type="project" value="UniProtKB"/>
</dbReference>
<dbReference type="GO" id="GO:1902282">
    <property type="term" value="F:voltage-gated potassium channel activity involved in ventricular cardiac muscle cell action potential repolarization"/>
    <property type="evidence" value="ECO:0007669"/>
    <property type="project" value="Ensembl"/>
</dbReference>
<dbReference type="GO" id="GO:0071466">
    <property type="term" value="P:cellular response to xenobiotic stimulus"/>
    <property type="evidence" value="ECO:0007669"/>
    <property type="project" value="Ensembl"/>
</dbReference>
<dbReference type="GO" id="GO:0086010">
    <property type="term" value="P:membrane depolarization during action potential"/>
    <property type="evidence" value="ECO:0007669"/>
    <property type="project" value="Ensembl"/>
</dbReference>
<dbReference type="GO" id="GO:1903765">
    <property type="term" value="P:negative regulation of potassium ion export across plasma membrane"/>
    <property type="evidence" value="ECO:0007669"/>
    <property type="project" value="Ensembl"/>
</dbReference>
<dbReference type="GO" id="GO:0045893">
    <property type="term" value="P:positive regulation of DNA-templated transcription"/>
    <property type="evidence" value="ECO:0007669"/>
    <property type="project" value="Ensembl"/>
</dbReference>
<dbReference type="GO" id="GO:1901381">
    <property type="term" value="P:positive regulation of potassium ion transmembrane transport"/>
    <property type="evidence" value="ECO:0007669"/>
    <property type="project" value="Ensembl"/>
</dbReference>
<dbReference type="GO" id="GO:0097623">
    <property type="term" value="P:potassium ion export across plasma membrane"/>
    <property type="evidence" value="ECO:0007669"/>
    <property type="project" value="Ensembl"/>
</dbReference>
<dbReference type="GO" id="GO:0055075">
    <property type="term" value="P:potassium ion homeostasis"/>
    <property type="evidence" value="ECO:0007669"/>
    <property type="project" value="Ensembl"/>
</dbReference>
<dbReference type="GO" id="GO:1990573">
    <property type="term" value="P:potassium ion import across plasma membrane"/>
    <property type="evidence" value="ECO:0007669"/>
    <property type="project" value="Ensembl"/>
</dbReference>
<dbReference type="GO" id="GO:0086091">
    <property type="term" value="P:regulation of heart rate by cardiac conduction"/>
    <property type="evidence" value="ECO:0007669"/>
    <property type="project" value="Ensembl"/>
</dbReference>
<dbReference type="GO" id="GO:0060307">
    <property type="term" value="P:regulation of ventricular cardiac muscle cell membrane repolarization"/>
    <property type="evidence" value="ECO:0007669"/>
    <property type="project" value="Ensembl"/>
</dbReference>
<dbReference type="CDD" id="cd00038">
    <property type="entry name" value="CAP_ED"/>
    <property type="match status" value="1"/>
</dbReference>
<dbReference type="CDD" id="cd00130">
    <property type="entry name" value="PAS"/>
    <property type="match status" value="1"/>
</dbReference>
<dbReference type="FunFam" id="1.10.287.70:FF:000020">
    <property type="entry name" value="Potassium channel, voltage-gated eag-related subfamily H, member 7"/>
    <property type="match status" value="1"/>
</dbReference>
<dbReference type="FunFam" id="2.60.120.10:FF:000011">
    <property type="entry name" value="Potassium channel, voltage-gated eag-related subfamily H, member 7"/>
    <property type="match status" value="1"/>
</dbReference>
<dbReference type="FunFam" id="1.10.1200.260:FF:000001">
    <property type="entry name" value="Potassium voltage-gated channel subfamily H member 7"/>
    <property type="match status" value="1"/>
</dbReference>
<dbReference type="FunFam" id="3.30.450.20:FF:000001">
    <property type="entry name" value="Potassium voltage-gated channel subfamily H member 7"/>
    <property type="match status" value="1"/>
</dbReference>
<dbReference type="Gene3D" id="1.10.1200.260">
    <property type="match status" value="1"/>
</dbReference>
<dbReference type="Gene3D" id="1.10.287.70">
    <property type="match status" value="1"/>
</dbReference>
<dbReference type="Gene3D" id="2.60.120.10">
    <property type="entry name" value="Jelly Rolls"/>
    <property type="match status" value="1"/>
</dbReference>
<dbReference type="Gene3D" id="3.30.450.20">
    <property type="entry name" value="PAS domain"/>
    <property type="match status" value="1"/>
</dbReference>
<dbReference type="InterPro" id="IPR000595">
    <property type="entry name" value="cNMP-bd_dom"/>
</dbReference>
<dbReference type="InterPro" id="IPR018490">
    <property type="entry name" value="cNMP-bd_dom_sf"/>
</dbReference>
<dbReference type="InterPro" id="IPR005821">
    <property type="entry name" value="Ion_trans_dom"/>
</dbReference>
<dbReference type="InterPro" id="IPR003938">
    <property type="entry name" value="K_chnl_volt-dep_EAG/ELK/ERG"/>
</dbReference>
<dbReference type="InterPro" id="IPR003967">
    <property type="entry name" value="K_chnl_volt-dep_ERG"/>
</dbReference>
<dbReference type="InterPro" id="IPR050818">
    <property type="entry name" value="KCNH_animal-type"/>
</dbReference>
<dbReference type="InterPro" id="IPR001610">
    <property type="entry name" value="PAC"/>
</dbReference>
<dbReference type="InterPro" id="IPR000014">
    <property type="entry name" value="PAS"/>
</dbReference>
<dbReference type="InterPro" id="IPR000700">
    <property type="entry name" value="PAS-assoc_C"/>
</dbReference>
<dbReference type="InterPro" id="IPR035965">
    <property type="entry name" value="PAS-like_dom_sf"/>
</dbReference>
<dbReference type="InterPro" id="IPR014710">
    <property type="entry name" value="RmlC-like_jellyroll"/>
</dbReference>
<dbReference type="NCBIfam" id="TIGR00229">
    <property type="entry name" value="sensory_box"/>
    <property type="match status" value="1"/>
</dbReference>
<dbReference type="PANTHER" id="PTHR10217:SF506">
    <property type="entry name" value="POTASSIUM VOLTAGE-GATED CHANNEL SUBFAMILY H MEMBER 2"/>
    <property type="match status" value="1"/>
</dbReference>
<dbReference type="PANTHER" id="PTHR10217">
    <property type="entry name" value="VOLTAGE AND LIGAND GATED POTASSIUM CHANNEL"/>
    <property type="match status" value="1"/>
</dbReference>
<dbReference type="Pfam" id="PF00027">
    <property type="entry name" value="cNMP_binding"/>
    <property type="match status" value="1"/>
</dbReference>
<dbReference type="Pfam" id="PF00520">
    <property type="entry name" value="Ion_trans"/>
    <property type="match status" value="1"/>
</dbReference>
<dbReference type="Pfam" id="PF13426">
    <property type="entry name" value="PAS_9"/>
    <property type="match status" value="1"/>
</dbReference>
<dbReference type="PRINTS" id="PR01463">
    <property type="entry name" value="EAGCHANLFMLY"/>
</dbReference>
<dbReference type="PRINTS" id="PR01470">
    <property type="entry name" value="ERGCHANNEL"/>
</dbReference>
<dbReference type="SMART" id="SM00100">
    <property type="entry name" value="cNMP"/>
    <property type="match status" value="1"/>
</dbReference>
<dbReference type="SMART" id="SM00086">
    <property type="entry name" value="PAC"/>
    <property type="match status" value="1"/>
</dbReference>
<dbReference type="SUPFAM" id="SSF51206">
    <property type="entry name" value="cAMP-binding domain-like"/>
    <property type="match status" value="1"/>
</dbReference>
<dbReference type="SUPFAM" id="SSF55785">
    <property type="entry name" value="PYP-like sensor domain (PAS domain)"/>
    <property type="match status" value="1"/>
</dbReference>
<dbReference type="SUPFAM" id="SSF81324">
    <property type="entry name" value="Voltage-gated potassium channels"/>
    <property type="match status" value="1"/>
</dbReference>
<dbReference type="PROSITE" id="PS50042">
    <property type="entry name" value="CNMP_BINDING_3"/>
    <property type="match status" value="1"/>
</dbReference>
<dbReference type="PROSITE" id="PS50113">
    <property type="entry name" value="PAC"/>
    <property type="match status" value="1"/>
</dbReference>
<dbReference type="PROSITE" id="PS50112">
    <property type="entry name" value="PAS"/>
    <property type="match status" value="1"/>
</dbReference>
<protein>
    <recommendedName>
        <fullName evidence="3">Voltage-gated inwardly rectifying potassium channel KCNH2</fullName>
    </recommendedName>
    <alternativeName>
        <fullName>Ether-a-go-go-related gene potassium channel 1</fullName>
        <shortName>ERG-1</shortName>
        <shortName>Eag-related protein 1</shortName>
        <shortName>Ether-a-go-go-related protein 1</shortName>
    </alternativeName>
    <alternativeName>
        <fullName>Potassium voltage-gated channel subfamily H member 2</fullName>
    </alternativeName>
    <alternativeName>
        <fullName>Voltage-gated potassium channel subunit Kv11.1</fullName>
    </alternativeName>
</protein>
<proteinExistence type="evidence at transcript level"/>
<accession>Q9TUI4</accession>
<accession>K7GN01</accession>
<evidence type="ECO:0000250" key="1">
    <source>
        <dbReference type="UniProtKB" id="O08962"/>
    </source>
</evidence>
<evidence type="ECO:0000250" key="2">
    <source>
        <dbReference type="UniProtKB" id="O35219"/>
    </source>
</evidence>
<evidence type="ECO:0000250" key="3">
    <source>
        <dbReference type="UniProtKB" id="Q12809"/>
    </source>
</evidence>
<evidence type="ECO:0000250" key="4">
    <source>
        <dbReference type="UniProtKB" id="Q63472"/>
    </source>
</evidence>
<evidence type="ECO:0000255" key="5"/>
<evidence type="ECO:0000255" key="6">
    <source>
        <dbReference type="PROSITE-ProRule" id="PRU00060"/>
    </source>
</evidence>
<evidence type="ECO:0000255" key="7">
    <source>
        <dbReference type="PROSITE-ProRule" id="PRU00140"/>
    </source>
</evidence>
<evidence type="ECO:0000255" key="8">
    <source>
        <dbReference type="PROSITE-ProRule" id="PRU00141"/>
    </source>
</evidence>
<evidence type="ECO:0000256" key="9">
    <source>
        <dbReference type="SAM" id="MobiDB-lite"/>
    </source>
</evidence>
<evidence type="ECO:0000305" key="10"/>
<comment type="function">
    <text evidence="3">Pore-forming (alpha) subunit of voltage-gated inwardly rectifying potassium channel. Characterized by unusual gating kinetics by producing relatively small outward currents during membrane depolarization and large inward currents during subsequent repolarization which reflect a rapid inactivation during depolarization and quick recovery from inactivation but slow deactivation (closing) during repolarization. Channel properties are modulated by cAMP and subunit assembly. Forms a stable complex with KCNE1 or KCNE2, and that this heteromultimerization regulates inward rectifier potassium channel activity.</text>
</comment>
<comment type="catalytic activity">
    <reaction evidence="3">
        <text>K(+)(in) = K(+)(out)</text>
        <dbReference type="Rhea" id="RHEA:29463"/>
        <dbReference type="ChEBI" id="CHEBI:29103"/>
    </reaction>
</comment>
<comment type="subunit">
    <text evidence="1 3">The potassium channel is probably composed of a homo- or heterotetrameric complex of pore-forming alpha subunits that can associate with modulating beta subunits. Interacts with DNAJB12 and DNAJB14; chaperones DNAJB12 and DNAJB14 promote tetramerization (By similarity). Heteromultimer with KCNH6/ERG2 and KCNH7/ERG3 (By similarity). Interacts with ALG10B (By similarity). Forms a stable complex with KCNE1 or KCNE2, and that this heteromultimerization regulates Inward rectifier potassium channel activity. Interacts with CANX. The core-glycosylated, but not the fully glycosylated form interacts with RNF207. Interacts with NDFIP1 and NDFIP2; this interaction decreases the cell membrane expression by targeting KCNH2, through interaction with NEDD4L, for the degradation through the multivesicular bodies (MVBs)-lysosomal pathway (By similarity).</text>
</comment>
<comment type="subcellular location">
    <subcellularLocation>
        <location evidence="3">Cell membrane</location>
        <topology evidence="5">Multi-pass membrane protein</topology>
    </subcellularLocation>
</comment>
<comment type="domain">
    <text evidence="3">The S4-S5 linker acts as a signal integrator where it both couples voltage-sensor domain (VSD) movement to pore opening and closure, as well as providing a binding site for other domains that regulate activation and/or deactivation of the channel.</text>
</comment>
<comment type="PTM">
    <text evidence="3">Phosphorylated on serine and threonine residues. Phosphorylation by PKA inhibits ion conduction.</text>
</comment>
<comment type="similarity">
    <text evidence="10">Belongs to the potassium channel family. H (Eag) (TC 1.A.1.20) subfamily. Kv11.1/KCNH2 sub-subfamily.</text>
</comment>
<sequence>MPVRRGHVAPQNTFLDTIIRKFEGQSRKFIIANARVENCAVIYCNDGFCELCGYSRAEVMQRPCTCDFLHGPRTQRRAAAQIAQALLGAEERKVEIAFYRKDGSCFLCLVDVVPVKNEDGAVIMFILNFEVVMEKDMVGSPARDTNHRAPPTSWLAPGRAKTFRLKLPALLALTARETPVRPGGAGSAGAPGAVVVDVDLTPAAPSSESLALDEVTAMDNHVAGIGPAEERRALVGSGSPPACAPGPHPSPRAHSLNPDGSGSSCSLARTRSRESCASVRRASSADDIEAMRAGALPPPPRHASTGAMHPLRSGLLNSTSDSDLVRYRTISKIPQITLNFVDLKGDPFLASPTSDREIIAPKIKERTHNVTEKVTQVLSLGADVLPEYKLQAPRIHRWTILHYSPFKAVWDWLILLLVIYTAVFTPYSAAFLLKETEEGSQAPDCGYACQPLAVVDLIVDIMFIVDILINFRTTYVNANEEVVSHPGRIAVHYFKGWFLIDMVAAIPFDLLIFGSGSEELIGLLKTARLLRLVRVARKLDRYSEYGAAVLFLLMCTFALIAHWLACIWYAIGNMEQPNMDSHIGWLHNLGDQIGKPYNSSGLGGPSIKDKYVTALYFTFSSLTSVGFGNVSPNTNSEKIFSICVMLIGSLMYASIFGNVSAIIQRLYSGTARYHTQMLRVREFIRFHQIPNPLRQRLEEYFQHAWSYTNGIDMNAVLKGFPECLQADICLHLNRSLLQHCKPFRGATKGCLRALAMKFKTTHAPPGDTLVHAGDLLTALYFISRGSIEILRGDVVVAILGKNDIFGEPLNLYARPGKSNGDVRALTYCDLHKIHRDDLLEVLDMYPEFSDHFWSSLEITFNLRDTNMIPGSPGSTELEGGFNRQRKRKLSFRRRTDKDPEQPGEVSALGPSRAGAGPSGRGQQGGPWGESLSSGPSSPESSEDEGPGRSSSPLRLVPFSSPRPPGELPGGDPLTEDVEKSSDTCNPLSGAFSGVSNIFSFWGDSRGRQYQELPRCPAPAPAPSLLNIPLSSPGRRPRGDVESRLDALQRQLNRLETRLSADMATVLQLLQRQMTLVPPAYSAVTTPGPGPASTSPLLPVSPIPTLTLDSLSQVSQFMACEELPQDGPARRLSLPGQLGALTSQPLHRHGSDPGS</sequence>
<gene>
    <name evidence="3" type="primary">KCNH2</name>
    <name type="synonym">ERG</name>
</gene>